<protein>
    <recommendedName>
        <fullName>Thermostable carboxypeptidase 1</fullName>
        <ecNumber>3.4.17.19</ecNumber>
    </recommendedName>
    <alternativeName>
        <fullName>TthCP1</fullName>
    </alternativeName>
</protein>
<organism>
    <name type="scientific">Thermus thermophilus (strain ATCC 27634 / DSM 579 / HB8)</name>
    <dbReference type="NCBI Taxonomy" id="300852"/>
    <lineage>
        <taxon>Bacteria</taxon>
        <taxon>Thermotogati</taxon>
        <taxon>Deinococcota</taxon>
        <taxon>Deinococci</taxon>
        <taxon>Thermales</taxon>
        <taxon>Thermaceae</taxon>
        <taxon>Thermus</taxon>
    </lineage>
</organism>
<keyword id="KW-0002">3D-structure</keyword>
<keyword id="KW-0121">Carboxypeptidase</keyword>
<keyword id="KW-0378">Hydrolase</keyword>
<keyword id="KW-0479">Metal-binding</keyword>
<keyword id="KW-0482">Metalloprotease</keyword>
<keyword id="KW-0645">Protease</keyword>
<keyword id="KW-1185">Reference proteome</keyword>
<keyword id="KW-0862">Zinc</keyword>
<comment type="function">
    <text evidence="3">Broad specificity carboxypetidase that releases amino acids sequentially from the C-terminus, including neutral, aromatic, polar and basic residues, but not Pro. Has lower activity with substrates ending with Gly or Glu.</text>
</comment>
<comment type="catalytic activity">
    <reaction evidence="1 3">
        <text>Release of a C-terminal amino acid with broad specificity, except for -Pro.</text>
        <dbReference type="EC" id="3.4.17.19"/>
    </reaction>
</comment>
<comment type="cofactor">
    <cofactor evidence="3">
        <name>Zn(2+)</name>
        <dbReference type="ChEBI" id="CHEBI:29105"/>
    </cofactor>
    <text evidence="3">Binds 1 zinc ion per subunit.</text>
</comment>
<comment type="subunit">
    <text evidence="2 3">Homodimer.</text>
</comment>
<comment type="similarity">
    <text evidence="1 4">Belongs to the peptidase M32 family.</text>
</comment>
<proteinExistence type="evidence at protein level"/>
<sequence length="510" mass="58014">MTPEAAYQNLLEFQRETAYLASLGALAAWDQRTMIPKKGHEHRARQMAALARLLHQRMTDPRIGEWLEKVEGSPLVQDPLSDAAVNVREWRQAYERARAIPERLAVELAQAESEAESFWEEARPRDDWRGFLPYLKRVYALTKEKAEVLFALPPAPGDPPYGELYDALLDGYEPGMRARELLPLFAELKEGLKGLLDRILGSGKRPDTSILHRPYPVEAQRRFALELLSACGYDLEAGRLDPTAHPFEIAIGPGDVRITTRYYEDFFNAGIFGTLHEMGHALYEQGLPKEHWGTPRGDAVSLGVHESQSRTWENLVGRSLGFWERFFPRAREVFASLGDVSLEDFHFAVNAVEPSLIRVEADEVTYNLHILVRLELELALFRGELSPEDLPEAWAEKYRDHLGVAPKDYKDGVMQDVHWAGGLFGYFPTYTLGNLYAAQFFQKAEAELGPLEPRFARGEFQPFLDWTRARIHAEGSRFRPRVLVERVTGEAPSARPFLAYLEKKYAALYG</sequence>
<evidence type="ECO:0000255" key="1">
    <source>
        <dbReference type="PROSITE-ProRule" id="PRU01378"/>
    </source>
</evidence>
<evidence type="ECO:0000269" key="2">
    <source>
    </source>
</evidence>
<evidence type="ECO:0000269" key="3">
    <source>
    </source>
</evidence>
<evidence type="ECO:0000305" key="4"/>
<evidence type="ECO:0007829" key="5">
    <source>
        <dbReference type="PDB" id="5WVU"/>
    </source>
</evidence>
<gene>
    <name type="ordered locus">TTHA0270</name>
</gene>
<dbReference type="EC" id="3.4.17.19"/>
<dbReference type="EMBL" id="AP008226">
    <property type="protein sequence ID" value="BAD70093.1"/>
    <property type="molecule type" value="Genomic_DNA"/>
</dbReference>
<dbReference type="RefSeq" id="WP_011174078.1">
    <property type="nucleotide sequence ID" value="NC_006461.1"/>
</dbReference>
<dbReference type="RefSeq" id="YP_143536.1">
    <property type="nucleotide sequence ID" value="NC_006461.1"/>
</dbReference>
<dbReference type="PDB" id="3HOA">
    <property type="method" value="X-ray"/>
    <property type="resolution" value="2.10 A"/>
    <property type="chains" value="A/B=1-509"/>
</dbReference>
<dbReference type="PDB" id="5WVU">
    <property type="method" value="X-ray"/>
    <property type="resolution" value="2.60 A"/>
    <property type="chains" value="A/B/C=1-510"/>
</dbReference>
<dbReference type="PDBsum" id="3HOA"/>
<dbReference type="PDBsum" id="5WVU"/>
<dbReference type="SMR" id="Q5SLM3"/>
<dbReference type="MEROPS" id="M32.001"/>
<dbReference type="EnsemblBacteria" id="BAD70093">
    <property type="protein sequence ID" value="BAD70093"/>
    <property type="gene ID" value="BAD70093"/>
</dbReference>
<dbReference type="GeneID" id="3168368"/>
<dbReference type="KEGG" id="ttj:TTHA0270"/>
<dbReference type="PATRIC" id="fig|300852.9.peg.270"/>
<dbReference type="eggNOG" id="COG2317">
    <property type="taxonomic scope" value="Bacteria"/>
</dbReference>
<dbReference type="HOGENOM" id="CLU_032916_1_1_0"/>
<dbReference type="PhylomeDB" id="Q5SLM3"/>
<dbReference type="Proteomes" id="UP000000532">
    <property type="component" value="Chromosome"/>
</dbReference>
<dbReference type="GO" id="GO:0004181">
    <property type="term" value="F:metallocarboxypeptidase activity"/>
    <property type="evidence" value="ECO:0000314"/>
    <property type="project" value="UniProtKB"/>
</dbReference>
<dbReference type="GO" id="GO:0008270">
    <property type="term" value="F:zinc ion binding"/>
    <property type="evidence" value="ECO:0000314"/>
    <property type="project" value="UniProtKB"/>
</dbReference>
<dbReference type="GO" id="GO:0006508">
    <property type="term" value="P:proteolysis"/>
    <property type="evidence" value="ECO:0000314"/>
    <property type="project" value="UniProtKB"/>
</dbReference>
<dbReference type="CDD" id="cd06460">
    <property type="entry name" value="M32_Taq"/>
    <property type="match status" value="1"/>
</dbReference>
<dbReference type="FunFam" id="1.10.1370.30:FF:000003">
    <property type="entry name" value="Thermostable carboxypeptidase 1"/>
    <property type="match status" value="1"/>
</dbReference>
<dbReference type="Gene3D" id="1.10.1370.30">
    <property type="match status" value="1"/>
</dbReference>
<dbReference type="InterPro" id="IPR001333">
    <property type="entry name" value="Peptidase_M32_Taq"/>
</dbReference>
<dbReference type="PANTHER" id="PTHR34217:SF1">
    <property type="entry name" value="CARBOXYPEPTIDASE 1"/>
    <property type="match status" value="1"/>
</dbReference>
<dbReference type="PANTHER" id="PTHR34217">
    <property type="entry name" value="METAL-DEPENDENT CARBOXYPEPTIDASE"/>
    <property type="match status" value="1"/>
</dbReference>
<dbReference type="Pfam" id="PF02074">
    <property type="entry name" value="Peptidase_M32"/>
    <property type="match status" value="1"/>
</dbReference>
<dbReference type="PIRSF" id="PIRSF006615">
    <property type="entry name" value="Zn_crbxpep_Taq"/>
    <property type="match status" value="1"/>
</dbReference>
<dbReference type="PRINTS" id="PR00998">
    <property type="entry name" value="CRBOXYPTASET"/>
</dbReference>
<dbReference type="SUPFAM" id="SSF55486">
    <property type="entry name" value="Metalloproteases ('zincins'), catalytic domain"/>
    <property type="match status" value="1"/>
</dbReference>
<dbReference type="PROSITE" id="PS52034">
    <property type="entry name" value="PEPTIDASE_M32"/>
    <property type="match status" value="1"/>
</dbReference>
<dbReference type="PROSITE" id="PS00142">
    <property type="entry name" value="ZINC_PROTEASE"/>
    <property type="match status" value="1"/>
</dbReference>
<name>CBP1_THET8</name>
<feature type="chain" id="PRO_0000428835" description="Thermostable carboxypeptidase 1">
    <location>
        <begin position="1"/>
        <end position="510"/>
    </location>
</feature>
<feature type="domain" description="Peptidase M32" evidence="1">
    <location>
        <begin position="3"/>
        <end position="506"/>
    </location>
</feature>
<feature type="short sequence motif" description="HPF" evidence="1">
    <location>
        <begin position="245"/>
        <end position="247"/>
    </location>
</feature>
<feature type="short sequence motif" description="DXRXT" evidence="1">
    <location>
        <begin position="255"/>
        <end position="259"/>
    </location>
</feature>
<feature type="short sequence motif" description="HEXXH" evidence="1">
    <location>
        <begin position="276"/>
        <end position="280"/>
    </location>
</feature>
<feature type="short sequence motif" description="HES/GQ" evidence="1">
    <location>
        <begin position="305"/>
        <end position="308"/>
    </location>
</feature>
<feature type="short sequence motif" description="I/NRXXA/SD" evidence="1">
    <location>
        <begin position="357"/>
        <end position="362"/>
    </location>
</feature>
<feature type="short sequence motif" description="GXXQDXHW" evidence="1">
    <location>
        <begin position="412"/>
        <end position="419"/>
    </location>
</feature>
<feature type="active site" description="Proton donor/acceptor" evidence="1">
    <location>
        <position position="277"/>
    </location>
</feature>
<feature type="binding site" evidence="2">
    <location>
        <position position="276"/>
    </location>
    <ligand>
        <name>Zn(2+)</name>
        <dbReference type="ChEBI" id="CHEBI:29105"/>
    </ligand>
</feature>
<feature type="binding site" evidence="2">
    <location>
        <position position="280"/>
    </location>
    <ligand>
        <name>Zn(2+)</name>
        <dbReference type="ChEBI" id="CHEBI:29105"/>
    </ligand>
</feature>
<feature type="binding site" evidence="2">
    <location>
        <position position="306"/>
    </location>
    <ligand>
        <name>Zn(2+)</name>
        <dbReference type="ChEBI" id="CHEBI:29105"/>
    </ligand>
</feature>
<feature type="helix" evidence="5">
    <location>
        <begin position="3"/>
        <end position="32"/>
    </location>
</feature>
<feature type="helix" evidence="5">
    <location>
        <begin position="40"/>
        <end position="59"/>
    </location>
</feature>
<feature type="helix" evidence="5">
    <location>
        <begin position="61"/>
        <end position="70"/>
    </location>
</feature>
<feature type="helix" evidence="5">
    <location>
        <begin position="74"/>
        <end position="76"/>
    </location>
</feature>
<feature type="helix" evidence="5">
    <location>
        <begin position="82"/>
        <end position="99"/>
    </location>
</feature>
<feature type="helix" evidence="5">
    <location>
        <begin position="102"/>
        <end position="122"/>
    </location>
</feature>
<feature type="turn" evidence="5">
    <location>
        <begin position="123"/>
        <end position="126"/>
    </location>
</feature>
<feature type="helix" evidence="5">
    <location>
        <begin position="128"/>
        <end position="150"/>
    </location>
</feature>
<feature type="helix" evidence="5">
    <location>
        <begin position="164"/>
        <end position="172"/>
    </location>
</feature>
<feature type="helix" evidence="5">
    <location>
        <begin position="178"/>
        <end position="200"/>
    </location>
</feature>
<feature type="helix" evidence="5">
    <location>
        <begin position="208"/>
        <end position="212"/>
    </location>
</feature>
<feature type="helix" evidence="5">
    <location>
        <begin position="217"/>
        <end position="231"/>
    </location>
</feature>
<feature type="helix" evidence="5">
    <location>
        <begin position="235"/>
        <end position="237"/>
    </location>
</feature>
<feature type="strand" evidence="5">
    <location>
        <begin position="238"/>
        <end position="242"/>
    </location>
</feature>
<feature type="strand" evidence="5">
    <location>
        <begin position="248"/>
        <end position="252"/>
    </location>
</feature>
<feature type="strand" evidence="5">
    <location>
        <begin position="255"/>
        <end position="260"/>
    </location>
</feature>
<feature type="helix" evidence="5">
    <location>
        <begin position="267"/>
        <end position="286"/>
    </location>
</feature>
<feature type="helix" evidence="5">
    <location>
        <begin position="289"/>
        <end position="291"/>
    </location>
</feature>
<feature type="helix" evidence="5">
    <location>
        <begin position="295"/>
        <end position="297"/>
    </location>
</feature>
<feature type="helix" evidence="5">
    <location>
        <begin position="302"/>
        <end position="313"/>
    </location>
</feature>
<feature type="turn" evidence="5">
    <location>
        <begin position="314"/>
        <end position="318"/>
    </location>
</feature>
<feature type="helix" evidence="5">
    <location>
        <begin position="320"/>
        <end position="333"/>
    </location>
</feature>
<feature type="helix" evidence="5">
    <location>
        <begin position="335"/>
        <end position="337"/>
    </location>
</feature>
<feature type="helix" evidence="5">
    <location>
        <begin position="342"/>
        <end position="348"/>
    </location>
</feature>
<feature type="helix" evidence="5">
    <location>
        <begin position="358"/>
        <end position="360"/>
    </location>
</feature>
<feature type="turn" evidence="5">
    <location>
        <begin position="363"/>
        <end position="365"/>
    </location>
</feature>
<feature type="helix" evidence="5">
    <location>
        <begin position="366"/>
        <end position="381"/>
    </location>
</feature>
<feature type="helix" evidence="5">
    <location>
        <begin position="387"/>
        <end position="389"/>
    </location>
</feature>
<feature type="helix" evidence="5">
    <location>
        <begin position="390"/>
        <end position="402"/>
    </location>
</feature>
<feature type="strand" evidence="5">
    <location>
        <begin position="407"/>
        <end position="409"/>
    </location>
</feature>
<feature type="turn" evidence="5">
    <location>
        <begin position="410"/>
        <end position="414"/>
    </location>
</feature>
<feature type="turn" evidence="5">
    <location>
        <begin position="418"/>
        <end position="422"/>
    </location>
</feature>
<feature type="helix" evidence="5">
    <location>
        <begin position="428"/>
        <end position="448"/>
    </location>
</feature>
<feature type="helix" evidence="5">
    <location>
        <begin position="452"/>
        <end position="456"/>
    </location>
</feature>
<feature type="helix" evidence="5">
    <location>
        <begin position="461"/>
        <end position="470"/>
    </location>
</feature>
<feature type="helix" evidence="5">
    <location>
        <begin position="472"/>
        <end position="474"/>
    </location>
</feature>
<feature type="helix" evidence="5">
    <location>
        <begin position="480"/>
        <end position="488"/>
    </location>
</feature>
<feature type="helix" evidence="5">
    <location>
        <begin position="495"/>
        <end position="508"/>
    </location>
</feature>
<reference key="1">
    <citation type="submission" date="2004-11" db="EMBL/GenBank/DDBJ databases">
        <title>Complete genome sequence of Thermus thermophilus HB8.</title>
        <authorList>
            <person name="Masui R."/>
            <person name="Kurokawa K."/>
            <person name="Nakagawa N."/>
            <person name="Tokunaga F."/>
            <person name="Koyama Y."/>
            <person name="Shibata T."/>
            <person name="Oshima T."/>
            <person name="Yokoyama S."/>
            <person name="Yasunaga T."/>
            <person name="Kuramitsu S."/>
        </authorList>
    </citation>
    <scope>NUCLEOTIDE SEQUENCE [LARGE SCALE GENOMIC DNA]</scope>
    <source>
        <strain>ATCC 27634 / DSM 579 / HB8</strain>
    </source>
</reference>
<reference key="2">
    <citation type="journal article" date="2004" name="Acta Crystallogr. D">
        <title>Crystallization and preliminary X-ray analysis of carboxypeptidase 1 from Thermus thermophilus.</title>
        <authorList>
            <person name="Nagata K."/>
            <person name="Tsutsui S."/>
            <person name="Lee W.C."/>
            <person name="Ito K."/>
            <person name="Kamo M."/>
            <person name="Inoue Y."/>
            <person name="Tanokura M."/>
        </authorList>
    </citation>
    <scope>X-RAY CRYSTALLOGRAPHY (2.60 ANGSTROMS) IN COMPLEX WITH ZINC</scope>
    <source>
        <strain>ATCC 27634 / DSM 579 / HB8</strain>
    </source>
</reference>
<reference key="3">
    <citation type="journal article" date="2009" name="Proteins">
        <title>Insight into the substrate length restriction of M32 carboxypeptidases: characterization of two distinct subfamilies.</title>
        <authorList>
            <person name="Lee M.M."/>
            <person name="Isaza C.E."/>
            <person name="White J.D."/>
            <person name="Chen R.P."/>
            <person name="Liang G.F."/>
            <person name="He H.T."/>
            <person name="Chan S.I."/>
            <person name="Chan M.K."/>
        </authorList>
    </citation>
    <scope>X-RAY CRYSTALLOGRAPHY (2.10 ANGSTROMS) IN COMPLEX WITH ZINC IONS</scope>
    <scope>COFACTOR</scope>
    <scope>CATALYTIC ACTIVITY</scope>
    <scope>SUBUNIT</scope>
    <scope>FUNCTION</scope>
    <source>
        <strain>ATCC 27634 / DSM 579 / HB8</strain>
    </source>
</reference>
<accession>Q5SLM3</accession>